<reference key="1">
    <citation type="journal article" date="2006" name="Virology">
        <title>The genome of Epstein-Barr virus type 2 strain AG876.</title>
        <authorList>
            <person name="Dolan A."/>
            <person name="Addison C."/>
            <person name="Gatherer D."/>
            <person name="Davison A.J."/>
            <person name="McGeoch D.J."/>
        </authorList>
    </citation>
    <scope>NUCLEOTIDE SEQUENCE [LARGE SCALE GENOMIC DNA]</scope>
</reference>
<reference key="2">
    <citation type="journal article" date="2009" name="Trends Biochem. Sci.">
        <title>Tinkering with a viral ribonucleotide reductase.</title>
        <authorList>
            <person name="Lembo D."/>
            <person name="Brune W."/>
        </authorList>
    </citation>
    <scope>REVIEW</scope>
</reference>
<organismHost>
    <name type="scientific">Homo sapiens</name>
    <name type="common">Human</name>
    <dbReference type="NCBI Taxonomy" id="9606"/>
</organismHost>
<name>RIR1_EBVA8</name>
<dbReference type="EC" id="1.17.4.1" evidence="1"/>
<dbReference type="EMBL" id="DQ279927">
    <property type="protein sequence ID" value="ABB89232.1"/>
    <property type="molecule type" value="Genomic_DNA"/>
</dbReference>
<dbReference type="RefSeq" id="YP_001129452.1">
    <property type="nucleotide sequence ID" value="NC_009334.1"/>
</dbReference>
<dbReference type="RefSeq" id="YP_401655.1">
    <property type="nucleotide sequence ID" value="NC_007605.1"/>
</dbReference>
<dbReference type="SMR" id="P0C702"/>
<dbReference type="DNASU" id="3783725"/>
<dbReference type="GeneID" id="3783725"/>
<dbReference type="KEGG" id="vg:3783725"/>
<dbReference type="KEGG" id="vg:5176186"/>
<dbReference type="Proteomes" id="UP000007639">
    <property type="component" value="Genome"/>
</dbReference>
<dbReference type="GO" id="GO:0005524">
    <property type="term" value="F:ATP binding"/>
    <property type="evidence" value="ECO:0007669"/>
    <property type="project" value="UniProtKB-UniRule"/>
</dbReference>
<dbReference type="GO" id="GO:0004748">
    <property type="term" value="F:ribonucleoside-diphosphate reductase activity, thioredoxin disulfide as acceptor"/>
    <property type="evidence" value="ECO:0007669"/>
    <property type="project" value="UniProtKB-UniRule"/>
</dbReference>
<dbReference type="GO" id="GO:0009263">
    <property type="term" value="P:deoxyribonucleotide biosynthetic process"/>
    <property type="evidence" value="ECO:0007669"/>
    <property type="project" value="InterPro"/>
</dbReference>
<dbReference type="GO" id="GO:0006260">
    <property type="term" value="P:DNA replication"/>
    <property type="evidence" value="ECO:0007669"/>
    <property type="project" value="UniProtKB-KW"/>
</dbReference>
<dbReference type="GO" id="GO:0019046">
    <property type="term" value="P:release from viral latency"/>
    <property type="evidence" value="ECO:0007669"/>
    <property type="project" value="UniProtKB-KW"/>
</dbReference>
<dbReference type="Gene3D" id="3.20.70.20">
    <property type="match status" value="1"/>
</dbReference>
<dbReference type="HAMAP" id="MF_04026">
    <property type="entry name" value="HSV_RIR1"/>
    <property type="match status" value="1"/>
</dbReference>
<dbReference type="InterPro" id="IPR034717">
    <property type="entry name" value="HSV_RIR1"/>
</dbReference>
<dbReference type="InterPro" id="IPR013346">
    <property type="entry name" value="NrdE_NrdA_C"/>
</dbReference>
<dbReference type="InterPro" id="IPR000788">
    <property type="entry name" value="RNR_lg_C"/>
</dbReference>
<dbReference type="InterPro" id="IPR013509">
    <property type="entry name" value="RNR_lsu_N"/>
</dbReference>
<dbReference type="InterPro" id="IPR039718">
    <property type="entry name" value="Rrm1"/>
</dbReference>
<dbReference type="NCBIfam" id="TIGR02506">
    <property type="entry name" value="NrdE_NrdA"/>
    <property type="match status" value="1"/>
</dbReference>
<dbReference type="PANTHER" id="PTHR11573">
    <property type="entry name" value="RIBONUCLEOSIDE-DIPHOSPHATE REDUCTASE LARGE CHAIN"/>
    <property type="match status" value="1"/>
</dbReference>
<dbReference type="PANTHER" id="PTHR11573:SF6">
    <property type="entry name" value="RIBONUCLEOSIDE-DIPHOSPHATE REDUCTASE LARGE SUBUNIT"/>
    <property type="match status" value="1"/>
</dbReference>
<dbReference type="Pfam" id="PF02867">
    <property type="entry name" value="Ribonuc_red_lgC"/>
    <property type="match status" value="1"/>
</dbReference>
<dbReference type="Pfam" id="PF00317">
    <property type="entry name" value="Ribonuc_red_lgN"/>
    <property type="match status" value="1"/>
</dbReference>
<dbReference type="PRINTS" id="PR01183">
    <property type="entry name" value="RIBORDTASEM1"/>
</dbReference>
<dbReference type="SUPFAM" id="SSF51998">
    <property type="entry name" value="PFL-like glycyl radical enzymes"/>
    <property type="match status" value="1"/>
</dbReference>
<dbReference type="PROSITE" id="PS00089">
    <property type="entry name" value="RIBORED_LARGE"/>
    <property type="match status" value="1"/>
</dbReference>
<sequence>MATTSHVEHELLSKLIDELKVKANSDPEADVLAGRLLHRLKAESVTHTVAEYLEVFSDKFYDEEFFQMHRDELETRVSAFAQSPAYERIVSSGYLSALRYYDTYLYVGRSGKQESVQHFYMRLAGFCASTTCLYAGLRAALQRARPEIESDMEVFDYYFEHLTSQTVCCSTPFMRFAGVENSTLASCILTTPDLSSEWDVTQALYRHLGRYLFQRAGVGVGVTGAGQDGKHISLLMRMINSHVEYHNYGCKRPVSVAAYMEPWHSQIFKFLETKLPENHERCPGIFTGLFVPELFFKLFRDTPWSDWYLFDPKDAGDLERLYGEEFEREYYRLVTAGKFCGRVSIKSLMFSIVNCAVKAGSPFILLKEACNAHFWRDLQGEAMNAANLCAEVLQPSRKSVATCNLANICLPRCLVNAPLAVRAQRADTQGDELLLALPRLSVTLPGEGAVGDGFSLARLRDATQCATFVVACSILQGSPTYDSRDMASMGLGVQGLADVFADLGWQYTDPPSRSLNKEIFEHMYFTALCTSSLIGLHTRKIFPGFKQSKYAGGWFHWHDWAGTDLSIPREIWSRLSERIVRDGLFNSQFIALMPTSGCAQVTGCSDAFYPFYANASTKVTNKEEALRPNRSFWRHVRLDDREALNLVGGRVSCLPEALRQRYLRFQTAFDYNQEDLIQMSRDRAPFVDQSQSHSLFLREEDAARASTLANLLVRSYELGLKTIMYYCRIEKAADLGVMECKASAALSVPREEQNERSPAEQMPPRPMEPAQVAGPVDIMSKGPGEGPGGWCVPGGLEVCYKYRQLFSEDDLLETDGFTERACESCQ</sequence>
<accession>P0C702</accession>
<accession>Q777G1</accession>
<proteinExistence type="inferred from homology"/>
<organism>
    <name type="scientific">Epstein-Barr virus (strain AG876)</name>
    <name type="common">HHV-4</name>
    <name type="synonym">Human herpesvirus 4</name>
    <dbReference type="NCBI Taxonomy" id="82830"/>
    <lineage>
        <taxon>Viruses</taxon>
        <taxon>Duplodnaviria</taxon>
        <taxon>Heunggongvirae</taxon>
        <taxon>Peploviricota</taxon>
        <taxon>Herviviricetes</taxon>
        <taxon>Herpesvirales</taxon>
        <taxon>Orthoherpesviridae</taxon>
        <taxon>Gammaherpesvirinae</taxon>
        <taxon>Lymphocryptovirus</taxon>
        <taxon>Lymphocryptovirus humangamma4</taxon>
        <taxon>Epstein-Barr virus (strain GD1)</taxon>
    </lineage>
</organism>
<feature type="chain" id="PRO_0000375965" description="Ribonucleoside-diphosphate reductase large subunit">
    <location>
        <begin position="1"/>
        <end position="826"/>
    </location>
</feature>
<feature type="region of interest" description="Disordered" evidence="2">
    <location>
        <begin position="747"/>
        <end position="769"/>
    </location>
</feature>
<feature type="compositionally biased region" description="Basic and acidic residues" evidence="2">
    <location>
        <begin position="749"/>
        <end position="758"/>
    </location>
</feature>
<feature type="active site" description="Proton acceptor" evidence="1">
    <location>
        <position position="387"/>
    </location>
</feature>
<feature type="active site" description="Cysteine radical intermediate" evidence="1">
    <location>
        <position position="389"/>
    </location>
</feature>
<feature type="active site" description="Proton acceptor" evidence="1">
    <location>
        <position position="391"/>
    </location>
</feature>
<feature type="binding site" evidence="1">
    <location>
        <position position="171"/>
    </location>
    <ligand>
        <name>substrate</name>
    </ligand>
</feature>
<feature type="binding site" evidence="1">
    <location>
        <begin position="186"/>
        <end position="187"/>
    </location>
    <ligand>
        <name>substrate</name>
    </ligand>
</feature>
<feature type="binding site" evidence="1">
    <location>
        <position position="217"/>
    </location>
    <ligand>
        <name>substrate</name>
    </ligand>
</feature>
<feature type="binding site" evidence="1">
    <location>
        <begin position="387"/>
        <end position="391"/>
    </location>
    <ligand>
        <name>substrate</name>
    </ligand>
</feature>
<feature type="binding site" evidence="1">
    <location>
        <begin position="594"/>
        <end position="598"/>
    </location>
    <ligand>
        <name>substrate</name>
    </ligand>
</feature>
<feature type="site" description="Important for hydrogen atom transfer" evidence="1">
    <location>
        <position position="187"/>
    </location>
</feature>
<feature type="site" description="Important for hydrogen atom transfer" evidence="1">
    <location>
        <position position="403"/>
    </location>
</feature>
<feature type="site" description="Important for electron transfer" evidence="1">
    <location>
        <position position="725"/>
    </location>
</feature>
<feature type="site" description="Important for electron transfer" evidence="1">
    <location>
        <position position="726"/>
    </location>
</feature>
<feature type="site" description="Interacts with thioredoxin/glutaredoxin" evidence="1">
    <location>
        <position position="822"/>
    </location>
</feature>
<feature type="site" description="Interacts with thioredoxin/glutaredoxin" evidence="1">
    <location>
        <position position="825"/>
    </location>
</feature>
<feature type="disulfide bond" description="Redox-active" evidence="1">
    <location>
        <begin position="187"/>
        <end position="403"/>
    </location>
</feature>
<keyword id="KW-0067">ATP-binding</keyword>
<keyword id="KW-1015">Disulfide bond</keyword>
<keyword id="KW-0235">DNA replication</keyword>
<keyword id="KW-0244">Early protein</keyword>
<keyword id="KW-0547">Nucleotide-binding</keyword>
<keyword id="KW-0560">Oxidoreductase</keyword>
<keyword id="KW-1185">Reference proteome</keyword>
<keyword id="KW-1251">Viral latency</keyword>
<keyword id="KW-1272">Viral reactivation from latency</keyword>
<comment type="function">
    <text evidence="1">Ribonucleoside-diphosphate reductase holoenzyme provides the precursors necessary for viral DNA synthesis. Allows virus growth in non-dividing cells, as well as reactivation from latency in infected hosts. Catalyzes the biosynthesis of deoxyribonucleotides from the corresponding ribonucleotides.</text>
</comment>
<comment type="catalytic activity">
    <reaction evidence="1">
        <text>a 2'-deoxyribonucleoside 5'-diphosphate + [thioredoxin]-disulfide + H2O = a ribonucleoside 5'-diphosphate + [thioredoxin]-dithiol</text>
        <dbReference type="Rhea" id="RHEA:23252"/>
        <dbReference type="Rhea" id="RHEA-COMP:10698"/>
        <dbReference type="Rhea" id="RHEA-COMP:10700"/>
        <dbReference type="ChEBI" id="CHEBI:15377"/>
        <dbReference type="ChEBI" id="CHEBI:29950"/>
        <dbReference type="ChEBI" id="CHEBI:50058"/>
        <dbReference type="ChEBI" id="CHEBI:57930"/>
        <dbReference type="ChEBI" id="CHEBI:73316"/>
        <dbReference type="EC" id="1.17.4.1"/>
    </reaction>
</comment>
<comment type="subunit">
    <text evidence="1">Heterotetramer composed of a homodimer of the large subunit (R1) and a homodimer of the small subunit (R2). Larger multisubunit protein complex are also active, composed of (R1)n(R2)n.</text>
</comment>
<comment type="similarity">
    <text evidence="1">Belongs to the ribonucleoside diphosphate reductase large chain family.</text>
</comment>
<protein>
    <recommendedName>
        <fullName evidence="1">Ribonucleoside-diphosphate reductase large subunit</fullName>
        <shortName evidence="1">R1</shortName>
        <ecNumber evidence="1">1.17.4.1</ecNumber>
    </recommendedName>
    <alternativeName>
        <fullName evidence="1">Ribonucleotide reductase large subunit</fullName>
    </alternativeName>
</protein>
<evidence type="ECO:0000255" key="1">
    <source>
        <dbReference type="HAMAP-Rule" id="MF_04026"/>
    </source>
</evidence>
<evidence type="ECO:0000256" key="2">
    <source>
        <dbReference type="SAM" id="MobiDB-lite"/>
    </source>
</evidence>
<gene>
    <name evidence="1" type="primary">RIR1</name>
    <name type="ORF">BORF2</name>
</gene>